<sequence length="1364" mass="155976">MEFYESTYFIILIPSVVITVIFLFFWLFMKETLYDEVLAKQKRDLKFPPTKSDKKKTEKKKNKKKEAQNGNIHESDSESTPRDFKLSDALGTDEEQVAPVPLSATEASAGIRERKKKEKKQKAAQDDHVTKESEGSKSSGKKVEPVPVTKQPTPPSEPAAAKKKPGQKKQKNDDQDTKTDSVASPAKKQEPVLLHQEVKQENVSGKKKVSAKKQKVLVDEPLIQPTTYIPLVDNSDAGALEKREVVEVAKQNMNEGIQKSGGKKMKNETDKENAEVKFKDFVMAMKNMIFTEDEARCVVEVLKEKSGAIHDVLQKASKAESAAAIHQLQDKEKLLAAVKEEAAVAKEQCKQLTQELVAEKERNGLLTAKMRERINALEKEHGTFQSKIHVSYQESQQMKIKFQQRCEQMEAEISHLKQENTILRDAVSTSTNQMESKQAAELNKLRQDCARLVNELGEKNSKLQQEELQKKNAEQAVAQLKVQQQEAERRWEEIQVYLRKRTAEHEAAQQDVQNKLVAKDNEIQSLHSKLTDMVVSKQQLEQRMLQLIESEQKRASKEDSMQLRVQELVEQNDALNAQLQKLHSQMAAQTSASVLAEELHKVIAEKDKQLKQMEDSLGNEHANLTSKEEELKVLQNMNLSLKSEIQKLQALTNEQAAAAHELERMQKSIHIKDDKIRTLEEQLREELAQTVNTKEEFKILKDQNKTLQAEVQKLQALLSEPVQPTFEANKDLLEEMERGMRERDDKIKTVEELLEAGLIQMANKEEELKVLRTENSSLRKELQSLQIQLSEQVSFQSLVDELQKVIHEKDGKIKSVEELLQAEILKVANKEKTVQALTQKIEALKEEVGNSQLEMEKQVSITSQVKELQTLLKGKENQVKTMEALLEEKEKEIVQKGERLKGQQDTVAQLTSKVQELEQQNLQQLQQVPAASQVQDLESRLRGEEEQISKLKAVLEEKEREIASQVKQLQTMQSENESFKVQIQELKQENCKQASLAVQSEELLQVVAGKEKEIASLQNELACQRNAFEQQRKKNNDLREKNWKAMEALASTEKLLQDKVNKTAKEKQQHVEAAEVETRELLQKLFPNVSLPANVSHSEWICGFEKMAKEYLRGASGSEDIKVMEQKLKEAEELHILLQLECEKYKSVLAETEGILQRLQRSVEEEESKWKIKVEESQKELKQMRSSVASLEHEVERLKEEIKEVETLKKEREHLESELEKAEIERSTYVSEVRELKDLLTELQKKLDDSYSEAVRQNEELNLLKMKLSETLSKLKVDQNERQKVAGDLPKAQESLASLEREIGKVVGDANVIENSDVRTESELTDKRLNVAVNLNQDVGHLKKLLVSVSQMLSKGREHYQLVE</sequence>
<feature type="chain" id="PRO_0000084336" description="Kinectin">
    <location>
        <begin position="1"/>
        <end position="1364"/>
    </location>
</feature>
<feature type="topological domain" description="Cytoplasmic" evidence="1">
    <location>
        <begin position="1"/>
        <end position="6"/>
    </location>
</feature>
<feature type="transmembrane region" description="Helical; Signal-anchor for type II membrane protein" evidence="1">
    <location>
        <begin position="7"/>
        <end position="29"/>
    </location>
</feature>
<feature type="topological domain" description="Lumenal" evidence="1">
    <location>
        <begin position="30"/>
        <end position="1364"/>
    </location>
</feature>
<feature type="region of interest" description="Disordered" evidence="2">
    <location>
        <begin position="46"/>
        <end position="207"/>
    </location>
</feature>
<feature type="coiled-coil region" evidence="1">
    <location>
        <begin position="315"/>
        <end position="1085"/>
    </location>
</feature>
<feature type="coiled-coil region" evidence="1">
    <location>
        <begin position="1116"/>
        <end position="1306"/>
    </location>
</feature>
<feature type="compositionally biased region" description="Basic and acidic residues" evidence="2">
    <location>
        <begin position="46"/>
        <end position="56"/>
    </location>
</feature>
<feature type="compositionally biased region" description="Basic and acidic residues" evidence="2">
    <location>
        <begin position="73"/>
        <end position="86"/>
    </location>
</feature>
<feature type="compositionally biased region" description="Basic and acidic residues" evidence="2">
    <location>
        <begin position="121"/>
        <end position="135"/>
    </location>
</feature>
<feature type="compositionally biased region" description="Basic and acidic residues" evidence="2">
    <location>
        <begin position="170"/>
        <end position="179"/>
    </location>
</feature>
<feature type="glycosylation site" description="N-linked (GlcNAc...) asparagine" evidence="1">
    <location>
        <position position="202"/>
    </location>
</feature>
<feature type="glycosylation site" description="N-linked (GlcNAc...) asparagine" evidence="1">
    <location>
        <position position="267"/>
    </location>
</feature>
<feature type="glycosylation site" description="N-linked (GlcNAc...) asparagine" evidence="1">
    <location>
        <position position="623"/>
    </location>
</feature>
<feature type="glycosylation site" description="N-linked (GlcNAc...) asparagine" evidence="1">
    <location>
        <position position="638"/>
    </location>
</feature>
<feature type="glycosylation site" description="N-linked (GlcNAc...) asparagine" evidence="1">
    <location>
        <position position="704"/>
    </location>
</feature>
<feature type="glycosylation site" description="N-linked (GlcNAc...) asparagine" evidence="1">
    <location>
        <position position="775"/>
    </location>
</feature>
<feature type="glycosylation site" description="N-linked (GlcNAc...) asparagine" evidence="1">
    <location>
        <position position="976"/>
    </location>
</feature>
<feature type="glycosylation site" description="N-linked (GlcNAc...) asparagine" evidence="1">
    <location>
        <position position="1061"/>
    </location>
</feature>
<feature type="glycosylation site" description="N-linked (GlcNAc...) asparagine" evidence="1">
    <location>
        <position position="1088"/>
    </location>
</feature>
<feature type="glycosylation site" description="N-linked (GlcNAc...) asparagine" evidence="1">
    <location>
        <position position="1094"/>
    </location>
</feature>
<name>KTN1_CHICK</name>
<organism>
    <name type="scientific">Gallus gallus</name>
    <name type="common">Chicken</name>
    <dbReference type="NCBI Taxonomy" id="9031"/>
    <lineage>
        <taxon>Eukaryota</taxon>
        <taxon>Metazoa</taxon>
        <taxon>Chordata</taxon>
        <taxon>Craniata</taxon>
        <taxon>Vertebrata</taxon>
        <taxon>Euteleostomi</taxon>
        <taxon>Archelosauria</taxon>
        <taxon>Archosauria</taxon>
        <taxon>Dinosauria</taxon>
        <taxon>Saurischia</taxon>
        <taxon>Theropoda</taxon>
        <taxon>Coelurosauria</taxon>
        <taxon>Aves</taxon>
        <taxon>Neognathae</taxon>
        <taxon>Galloanserae</taxon>
        <taxon>Galliformes</taxon>
        <taxon>Phasianidae</taxon>
        <taxon>Phasianinae</taxon>
        <taxon>Gallus</taxon>
    </lineage>
</organism>
<reference key="1">
    <citation type="journal article" date="1995" name="Mol. Biol. Cell">
        <title>Characterization of kinectin, a kinesin-binding protein: primary sequence and N-terminal topogenic signal analysis.</title>
        <authorList>
            <person name="Yu H."/>
            <person name="Nicchitta C.V."/>
            <person name="Kumar J."/>
            <person name="Becker M."/>
            <person name="Toyoshima I."/>
            <person name="Sheetz M.P."/>
        </authorList>
    </citation>
    <scope>NUCLEOTIDE SEQUENCE [MRNA]</scope>
    <scope>PROTEIN SEQUENCE OF 2-12 AND 233-247</scope>
    <source>
        <strain>Leghorn</strain>
        <tissue>Brain</tissue>
    </source>
</reference>
<reference key="2">
    <citation type="journal article" date="1998" name="J. Biol. Chem.">
        <title>Ultrastructural and biochemical properties of the 120-kDa form of chick kinectin.</title>
        <authorList>
            <person name="Kumar J."/>
            <person name="Erickson H.P."/>
            <person name="Sheetz M.P."/>
        </authorList>
    </citation>
    <scope>SUBUNIT</scope>
    <scope>MYRISTOYLATION</scope>
</reference>
<keyword id="KW-0025">Alternative splicing</keyword>
<keyword id="KW-0175">Coiled coil</keyword>
<keyword id="KW-0903">Direct protein sequencing</keyword>
<keyword id="KW-0256">Endoplasmic reticulum</keyword>
<keyword id="KW-0325">Glycoprotein</keyword>
<keyword id="KW-0449">Lipoprotein</keyword>
<keyword id="KW-0472">Membrane</keyword>
<keyword id="KW-0519">Myristate</keyword>
<keyword id="KW-1185">Reference proteome</keyword>
<keyword id="KW-0735">Signal-anchor</keyword>
<keyword id="KW-0812">Transmembrane</keyword>
<keyword id="KW-1133">Transmembrane helix</keyword>
<protein>
    <recommendedName>
        <fullName>Kinectin</fullName>
    </recommendedName>
</protein>
<dbReference type="EMBL" id="U15617">
    <property type="protein sequence ID" value="AAA85818.1"/>
    <property type="molecule type" value="mRNA"/>
</dbReference>
<dbReference type="RefSeq" id="NP_990707.1">
    <property type="nucleotide sequence ID" value="NM_205376.1"/>
</dbReference>
<dbReference type="SMR" id="Q90631"/>
<dbReference type="FunCoup" id="Q90631">
    <property type="interactions" value="1980"/>
</dbReference>
<dbReference type="STRING" id="9031.ENSGALP00000004048"/>
<dbReference type="GlyCosmos" id="Q90631">
    <property type="glycosylation" value="10 sites, No reported glycans"/>
</dbReference>
<dbReference type="GlyGen" id="Q90631">
    <property type="glycosylation" value="10 sites"/>
</dbReference>
<dbReference type="PaxDb" id="9031-ENSGALP00000004048"/>
<dbReference type="GeneID" id="396335"/>
<dbReference type="KEGG" id="gga:396335"/>
<dbReference type="CTD" id="3895"/>
<dbReference type="VEuPathDB" id="HostDB:geneid_396335"/>
<dbReference type="eggNOG" id="ENOG502QSIW">
    <property type="taxonomic scope" value="Eukaryota"/>
</dbReference>
<dbReference type="InParanoid" id="Q90631"/>
<dbReference type="OrthoDB" id="5875463at2759"/>
<dbReference type="PhylomeDB" id="Q90631"/>
<dbReference type="PRO" id="PR:Q90631"/>
<dbReference type="Proteomes" id="UP000000539">
    <property type="component" value="Unassembled WGS sequence"/>
</dbReference>
<dbReference type="GO" id="GO:0005789">
    <property type="term" value="C:endoplasmic reticulum membrane"/>
    <property type="evidence" value="ECO:0007669"/>
    <property type="project" value="UniProtKB-SubCell"/>
</dbReference>
<dbReference type="GO" id="GO:0019894">
    <property type="term" value="F:kinesin binding"/>
    <property type="evidence" value="ECO:0007669"/>
    <property type="project" value="InterPro"/>
</dbReference>
<dbReference type="GO" id="GO:0007018">
    <property type="term" value="P:microtubule-based movement"/>
    <property type="evidence" value="ECO:0007669"/>
    <property type="project" value="InterPro"/>
</dbReference>
<dbReference type="GO" id="GO:0015031">
    <property type="term" value="P:protein transport"/>
    <property type="evidence" value="ECO:0007669"/>
    <property type="project" value="InterPro"/>
</dbReference>
<dbReference type="InterPro" id="IPR024854">
    <property type="entry name" value="Kinectin"/>
</dbReference>
<dbReference type="InterPro" id="IPR007794">
    <property type="entry name" value="Rib_rcpt_KP"/>
</dbReference>
<dbReference type="PANTHER" id="PTHR18864">
    <property type="entry name" value="KINECTIN"/>
    <property type="match status" value="1"/>
</dbReference>
<dbReference type="PANTHER" id="PTHR18864:SF1">
    <property type="entry name" value="KINECTIN"/>
    <property type="match status" value="1"/>
</dbReference>
<dbReference type="Pfam" id="PF05104">
    <property type="entry name" value="Rib_recp_KP_reg"/>
    <property type="match status" value="1"/>
</dbReference>
<accession>Q90631</accession>
<gene>
    <name type="primary">KTN1</name>
</gene>
<comment type="function">
    <text>Receptor for kinesin thus involved in kinesin-driven vesicle motility.</text>
</comment>
<comment type="subunit">
    <text evidence="3">Parallel homodimers formed between the membrane-bound and the cytosolic form, and also between 2 cytosolic forms.</text>
</comment>
<comment type="subcellular location">
    <subcellularLocation>
        <location>Endoplasmic reticulum membrane</location>
        <topology>Single-pass type II membrane protein</topology>
    </subcellularLocation>
    <text>Vesicle membrane protein anchored to the endoplasmic reticulum.</text>
</comment>
<comment type="alternative products">
    <event type="alternative splicing"/>
    <isoform>
        <id>Q90631-1</id>
        <name>1</name>
        <sequence type="displayed"/>
    </isoform>
    <text>A number of isoforms are produced.</text>
</comment>
<comment type="PTM">
    <text evidence="3">Both the membrane and cytoplasmic forms seem to be myristoylated.</text>
</comment>
<comment type="miscellaneous">
    <text>A cytoplasmic form lacking the first 232 amino acids has been characterized.</text>
</comment>
<comment type="similarity">
    <text evidence="4">Belongs to the kinectin family.</text>
</comment>
<proteinExistence type="evidence at protein level"/>
<evidence type="ECO:0000255" key="1"/>
<evidence type="ECO:0000256" key="2">
    <source>
        <dbReference type="SAM" id="MobiDB-lite"/>
    </source>
</evidence>
<evidence type="ECO:0000269" key="3">
    <source>
    </source>
</evidence>
<evidence type="ECO:0000305" key="4"/>